<sequence length="104" mass="12314">METIAFRMRLHPGKRDEYRRRHDAIWPELADALRAAGISDYWIFLDEDTHHLFAVLKRPIGHRIAQLAETDVMRRWWAYMADLMATGPDGRPVEKSLEPMFHLE</sequence>
<name>RHAM_BURCM</name>
<protein>
    <recommendedName>
        <fullName evidence="1">L-rhamnose mutarotase</fullName>
        <ecNumber evidence="1">5.1.3.32</ecNumber>
    </recommendedName>
    <alternativeName>
        <fullName evidence="1">Rhamnose 1-epimerase</fullName>
    </alternativeName>
    <alternativeName>
        <fullName evidence="1">Type-3 mutarotase</fullName>
    </alternativeName>
</protein>
<proteinExistence type="inferred from homology"/>
<organism>
    <name type="scientific">Burkholderia ambifaria (strain ATCC BAA-244 / DSM 16087 / CCUG 44356 / LMG 19182 / AMMD)</name>
    <name type="common">Burkholderia cepacia (strain AMMD)</name>
    <dbReference type="NCBI Taxonomy" id="339670"/>
    <lineage>
        <taxon>Bacteria</taxon>
        <taxon>Pseudomonadati</taxon>
        <taxon>Pseudomonadota</taxon>
        <taxon>Betaproteobacteria</taxon>
        <taxon>Burkholderiales</taxon>
        <taxon>Burkholderiaceae</taxon>
        <taxon>Burkholderia</taxon>
        <taxon>Burkholderia cepacia complex</taxon>
    </lineage>
</organism>
<comment type="function">
    <text evidence="1">Involved in the anomeric conversion of L-rhamnose.</text>
</comment>
<comment type="catalytic activity">
    <reaction evidence="1">
        <text>alpha-L-rhamnose = beta-L-rhamnose</text>
        <dbReference type="Rhea" id="RHEA:25584"/>
        <dbReference type="ChEBI" id="CHEBI:27586"/>
        <dbReference type="ChEBI" id="CHEBI:27907"/>
        <dbReference type="EC" id="5.1.3.32"/>
    </reaction>
</comment>
<comment type="pathway">
    <text evidence="1">Carbohydrate metabolism; L-rhamnose metabolism.</text>
</comment>
<comment type="subunit">
    <text evidence="1">Homodimer.</text>
</comment>
<comment type="subcellular location">
    <subcellularLocation>
        <location evidence="1">Cytoplasm</location>
    </subcellularLocation>
</comment>
<comment type="similarity">
    <text evidence="1">Belongs to the rhamnose mutarotase family.</text>
</comment>
<comment type="sequence caution" evidence="2">
    <conflict type="erroneous initiation">
        <sequence resource="EMBL-CDS" id="ABI88955"/>
    </conflict>
</comment>
<feature type="chain" id="PRO_0000344555" description="L-rhamnose mutarotase">
    <location>
        <begin position="1"/>
        <end position="104"/>
    </location>
</feature>
<feature type="active site" description="Proton donor" evidence="1">
    <location>
        <position position="22"/>
    </location>
</feature>
<feature type="binding site" evidence="1">
    <location>
        <position position="18"/>
    </location>
    <ligand>
        <name>substrate</name>
    </ligand>
</feature>
<feature type="binding site" evidence="1">
    <location>
        <position position="41"/>
    </location>
    <ligand>
        <name>substrate</name>
    </ligand>
</feature>
<feature type="binding site" evidence="1">
    <location>
        <begin position="76"/>
        <end position="77"/>
    </location>
    <ligand>
        <name>substrate</name>
    </ligand>
</feature>
<dbReference type="EC" id="5.1.3.32" evidence="1"/>
<dbReference type="EMBL" id="CP000441">
    <property type="protein sequence ID" value="ABI88955.1"/>
    <property type="status" value="ALT_INIT"/>
    <property type="molecule type" value="Genomic_DNA"/>
</dbReference>
<dbReference type="RefSeq" id="WP_041491427.1">
    <property type="nucleotide sequence ID" value="NC_008391.1"/>
</dbReference>
<dbReference type="SMR" id="Q0BA68"/>
<dbReference type="GeneID" id="93086405"/>
<dbReference type="KEGG" id="bam:Bamb_3401"/>
<dbReference type="PATRIC" id="fig|339670.21.peg.3613"/>
<dbReference type="eggNOG" id="COG3254">
    <property type="taxonomic scope" value="Bacteria"/>
</dbReference>
<dbReference type="UniPathway" id="UPA00125"/>
<dbReference type="Proteomes" id="UP000000662">
    <property type="component" value="Chromosome 2"/>
</dbReference>
<dbReference type="GO" id="GO:0005737">
    <property type="term" value="C:cytoplasm"/>
    <property type="evidence" value="ECO:0007669"/>
    <property type="project" value="UniProtKB-SubCell"/>
</dbReference>
<dbReference type="GO" id="GO:0062192">
    <property type="term" value="F:L-rhamnose mutarotase activity"/>
    <property type="evidence" value="ECO:0007669"/>
    <property type="project" value="UniProtKB-EC"/>
</dbReference>
<dbReference type="GO" id="GO:0019301">
    <property type="term" value="P:rhamnose catabolic process"/>
    <property type="evidence" value="ECO:0007669"/>
    <property type="project" value="TreeGrafter"/>
</dbReference>
<dbReference type="Gene3D" id="3.30.70.100">
    <property type="match status" value="1"/>
</dbReference>
<dbReference type="HAMAP" id="MF_01663">
    <property type="entry name" value="L_rham_rotase"/>
    <property type="match status" value="1"/>
</dbReference>
<dbReference type="InterPro" id="IPR011008">
    <property type="entry name" value="Dimeric_a/b-barrel"/>
</dbReference>
<dbReference type="InterPro" id="IPR013448">
    <property type="entry name" value="L-rhamnose_mutarotase"/>
</dbReference>
<dbReference type="InterPro" id="IPR008000">
    <property type="entry name" value="Rham/fucose_mutarotase"/>
</dbReference>
<dbReference type="NCBIfam" id="TIGR02625">
    <property type="entry name" value="YiiL_rotase"/>
    <property type="match status" value="1"/>
</dbReference>
<dbReference type="PANTHER" id="PTHR34389">
    <property type="entry name" value="L-RHAMNOSE MUTAROTASE"/>
    <property type="match status" value="1"/>
</dbReference>
<dbReference type="PANTHER" id="PTHR34389:SF2">
    <property type="entry name" value="L-RHAMNOSE MUTAROTASE"/>
    <property type="match status" value="1"/>
</dbReference>
<dbReference type="Pfam" id="PF05336">
    <property type="entry name" value="rhaM"/>
    <property type="match status" value="1"/>
</dbReference>
<dbReference type="SUPFAM" id="SSF54909">
    <property type="entry name" value="Dimeric alpha+beta barrel"/>
    <property type="match status" value="1"/>
</dbReference>
<reference key="1">
    <citation type="submission" date="2006-08" db="EMBL/GenBank/DDBJ databases">
        <title>Complete sequence of chromosome 2 of Burkholderia cepacia AMMD.</title>
        <authorList>
            <person name="Copeland A."/>
            <person name="Lucas S."/>
            <person name="Lapidus A."/>
            <person name="Barry K."/>
            <person name="Detter J.C."/>
            <person name="Glavina del Rio T."/>
            <person name="Hammon N."/>
            <person name="Israni S."/>
            <person name="Pitluck S."/>
            <person name="Bruce D."/>
            <person name="Chain P."/>
            <person name="Malfatti S."/>
            <person name="Shin M."/>
            <person name="Vergez L."/>
            <person name="Schmutz J."/>
            <person name="Larimer F."/>
            <person name="Land M."/>
            <person name="Hauser L."/>
            <person name="Kyrpides N."/>
            <person name="Kim E."/>
            <person name="Parke J."/>
            <person name="Coenye T."/>
            <person name="Konstantinidis K."/>
            <person name="Ramette A."/>
            <person name="Tiedje J."/>
            <person name="Richardson P."/>
        </authorList>
    </citation>
    <scope>NUCLEOTIDE SEQUENCE [LARGE SCALE GENOMIC DNA]</scope>
    <source>
        <strain>ATCC BAA-244 / DSM 16087 / CCUG 44356 / LMG 19182 / AMMD</strain>
    </source>
</reference>
<evidence type="ECO:0000255" key="1">
    <source>
        <dbReference type="HAMAP-Rule" id="MF_01663"/>
    </source>
</evidence>
<evidence type="ECO:0000305" key="2"/>
<keyword id="KW-0119">Carbohydrate metabolism</keyword>
<keyword id="KW-0963">Cytoplasm</keyword>
<keyword id="KW-0413">Isomerase</keyword>
<keyword id="KW-0684">Rhamnose metabolism</keyword>
<gene>
    <name evidence="1" type="primary">rhaM</name>
    <name type="ordered locus">Bamb_3401</name>
</gene>
<accession>Q0BA68</accession>